<gene>
    <name type="primary">Ppp1cc</name>
</gene>
<accession>P63088</accession>
<accession>O09186</accession>
<accession>O09189</accession>
<accession>P37139</accession>
<accession>Q64679</accession>
<name>PP1G_RAT</name>
<keyword id="KW-0002">3D-structure</keyword>
<keyword id="KW-0007">Acetylation</keyword>
<keyword id="KW-0025">Alternative splicing</keyword>
<keyword id="KW-0090">Biological rhythms</keyword>
<keyword id="KW-0119">Carbohydrate metabolism</keyword>
<keyword id="KW-0131">Cell cycle</keyword>
<keyword id="KW-0132">Cell division</keyword>
<keyword id="KW-0137">Centromere</keyword>
<keyword id="KW-0158">Chromosome</keyword>
<keyword id="KW-0963">Cytoplasm</keyword>
<keyword id="KW-0206">Cytoskeleton</keyword>
<keyword id="KW-0903">Direct protein sequencing</keyword>
<keyword id="KW-0321">Glycogen metabolism</keyword>
<keyword id="KW-0378">Hydrolase</keyword>
<keyword id="KW-0995">Kinetochore</keyword>
<keyword id="KW-0464">Manganese</keyword>
<keyword id="KW-0479">Metal-binding</keyword>
<keyword id="KW-0496">Mitochondrion</keyword>
<keyword id="KW-0539">Nucleus</keyword>
<keyword id="KW-0597">Phosphoprotein</keyword>
<keyword id="KW-0904">Protein phosphatase</keyword>
<keyword id="KW-1185">Reference proteome</keyword>
<dbReference type="EC" id="3.1.3.16" evidence="2"/>
<dbReference type="EMBL" id="D90165">
    <property type="protein sequence ID" value="BAA14196.1"/>
    <property type="molecule type" value="mRNA"/>
</dbReference>
<dbReference type="EMBL" id="D90166">
    <property type="protein sequence ID" value="BAA14197.1"/>
    <property type="molecule type" value="mRNA"/>
</dbReference>
<dbReference type="PIR" id="I76572">
    <property type="entry name" value="I76572"/>
</dbReference>
<dbReference type="PIR" id="I76573">
    <property type="entry name" value="I76573"/>
</dbReference>
<dbReference type="RefSeq" id="NP_001257912.1">
    <molecule id="P63088-2"/>
    <property type="nucleotide sequence ID" value="NM_001270983.1"/>
</dbReference>
<dbReference type="RefSeq" id="NP_071943.1">
    <molecule id="P63088-1"/>
    <property type="nucleotide sequence ID" value="NM_022498.2"/>
</dbReference>
<dbReference type="PDB" id="2O8A">
    <property type="method" value="X-ray"/>
    <property type="resolution" value="2.61 A"/>
    <property type="chains" value="A/B=2-323"/>
</dbReference>
<dbReference type="PDB" id="2O8G">
    <property type="method" value="X-ray"/>
    <property type="resolution" value="2.50 A"/>
    <property type="chains" value="A/B=2-323"/>
</dbReference>
<dbReference type="PDBsum" id="2O8A"/>
<dbReference type="PDBsum" id="2O8G"/>
<dbReference type="SMR" id="P63088"/>
<dbReference type="BioGRID" id="246801">
    <property type="interactions" value="4"/>
</dbReference>
<dbReference type="ELM" id="P63088"/>
<dbReference type="FunCoup" id="P63088">
    <property type="interactions" value="4475"/>
</dbReference>
<dbReference type="IntAct" id="P63088">
    <property type="interactions" value="10"/>
</dbReference>
<dbReference type="MINT" id="P63088"/>
<dbReference type="STRING" id="10116.ENSRNOP00000047912"/>
<dbReference type="GlyGen" id="P63088">
    <property type="glycosylation" value="1 site"/>
</dbReference>
<dbReference type="iPTMnet" id="P63088"/>
<dbReference type="PhosphoSitePlus" id="P63088"/>
<dbReference type="SwissPalm" id="P63088"/>
<dbReference type="jPOST" id="P63088"/>
<dbReference type="PaxDb" id="10116-ENSRNOP00000047912"/>
<dbReference type="Ensembl" id="ENSRNOT00000048851.4">
    <molecule id="P63088-2"/>
    <property type="protein sequence ID" value="ENSRNOP00000047912.2"/>
    <property type="gene ID" value="ENSRNOG00000001269.7"/>
</dbReference>
<dbReference type="Ensembl" id="ENSRNOT00000078761.2">
    <molecule id="P63088-1"/>
    <property type="protein sequence ID" value="ENSRNOP00000071829.1"/>
    <property type="gene ID" value="ENSRNOG00000001269.7"/>
</dbReference>
<dbReference type="GeneID" id="24669"/>
<dbReference type="KEGG" id="rno:24669"/>
<dbReference type="UCSC" id="RGD:3377">
    <molecule id="P63088-1"/>
    <property type="organism name" value="rat"/>
</dbReference>
<dbReference type="AGR" id="RGD:3377"/>
<dbReference type="CTD" id="5501"/>
<dbReference type="RGD" id="3377">
    <property type="gene designation" value="Ppp1cc"/>
</dbReference>
<dbReference type="eggNOG" id="KOG0374">
    <property type="taxonomic scope" value="Eukaryota"/>
</dbReference>
<dbReference type="GeneTree" id="ENSGT00940000153472"/>
<dbReference type="InParanoid" id="P63088"/>
<dbReference type="OMA" id="EEHEIRY"/>
<dbReference type="OrthoDB" id="1930084at2759"/>
<dbReference type="TreeFam" id="TF354243"/>
<dbReference type="Reactome" id="R-RNO-141444">
    <property type="pathway name" value="Amplification of signal from unattached kinetochores via a MAD2 inhibitory signal"/>
</dbReference>
<dbReference type="Reactome" id="R-RNO-2467813">
    <property type="pathway name" value="Separation of Sister Chromatids"/>
</dbReference>
<dbReference type="Reactome" id="R-RNO-2500257">
    <property type="pathway name" value="Resolution of Sister Chromatid Cohesion"/>
</dbReference>
<dbReference type="Reactome" id="R-RNO-5663220">
    <property type="pathway name" value="RHO GTPases Activate Formins"/>
</dbReference>
<dbReference type="Reactome" id="R-RNO-5673000">
    <property type="pathway name" value="RAF activation"/>
</dbReference>
<dbReference type="Reactome" id="R-RNO-68877">
    <property type="pathway name" value="Mitotic Prometaphase"/>
</dbReference>
<dbReference type="Reactome" id="R-RNO-9648025">
    <property type="pathway name" value="EML4 and NUDC in mitotic spindle formation"/>
</dbReference>
<dbReference type="EvolutionaryTrace" id="P63088"/>
<dbReference type="PRO" id="PR:P63088"/>
<dbReference type="Proteomes" id="UP000002494">
    <property type="component" value="Chromosome 12"/>
</dbReference>
<dbReference type="Bgee" id="ENSRNOG00000001269">
    <property type="expression patterns" value="Expressed in testis and 20 other cell types or tissues"/>
</dbReference>
<dbReference type="ExpressionAtlas" id="P63088">
    <property type="expression patterns" value="baseline and differential"/>
</dbReference>
<dbReference type="GO" id="GO:0000781">
    <property type="term" value="C:chromosome, telomeric region"/>
    <property type="evidence" value="ECO:0000266"/>
    <property type="project" value="RGD"/>
</dbReference>
<dbReference type="GO" id="GO:0032154">
    <property type="term" value="C:cleavage furrow"/>
    <property type="evidence" value="ECO:0007669"/>
    <property type="project" value="UniProtKB-SubCell"/>
</dbReference>
<dbReference type="GO" id="GO:0005737">
    <property type="term" value="C:cytoplasm"/>
    <property type="evidence" value="ECO:0000266"/>
    <property type="project" value="RGD"/>
</dbReference>
<dbReference type="GO" id="GO:0005829">
    <property type="term" value="C:cytosol"/>
    <property type="evidence" value="ECO:0000304"/>
    <property type="project" value="Reactome"/>
</dbReference>
<dbReference type="GO" id="GO:0043197">
    <property type="term" value="C:dendritic spine"/>
    <property type="evidence" value="ECO:0000314"/>
    <property type="project" value="RGD"/>
</dbReference>
<dbReference type="GO" id="GO:0098978">
    <property type="term" value="C:glutamatergic synapse"/>
    <property type="evidence" value="ECO:0000314"/>
    <property type="project" value="SynGO"/>
</dbReference>
<dbReference type="GO" id="GO:0000776">
    <property type="term" value="C:kinetochore"/>
    <property type="evidence" value="ECO:0007669"/>
    <property type="project" value="UniProtKB-KW"/>
</dbReference>
<dbReference type="GO" id="GO:0005815">
    <property type="term" value="C:microtubule organizing center"/>
    <property type="evidence" value="ECO:0007669"/>
    <property type="project" value="UniProtKB-SubCell"/>
</dbReference>
<dbReference type="GO" id="GO:0030496">
    <property type="term" value="C:midbody"/>
    <property type="evidence" value="ECO:0007669"/>
    <property type="project" value="UniProtKB-SubCell"/>
</dbReference>
<dbReference type="GO" id="GO:0005741">
    <property type="term" value="C:mitochondrial outer membrane"/>
    <property type="evidence" value="ECO:0000266"/>
    <property type="project" value="RGD"/>
</dbReference>
<dbReference type="GO" id="GO:0005739">
    <property type="term" value="C:mitochondrion"/>
    <property type="evidence" value="ECO:0000250"/>
    <property type="project" value="UniProtKB"/>
</dbReference>
<dbReference type="GO" id="GO:0016607">
    <property type="term" value="C:nuclear speck"/>
    <property type="evidence" value="ECO:0007669"/>
    <property type="project" value="UniProtKB-SubCell"/>
</dbReference>
<dbReference type="GO" id="GO:0005730">
    <property type="term" value="C:nucleolus"/>
    <property type="evidence" value="ECO:0000266"/>
    <property type="project" value="RGD"/>
</dbReference>
<dbReference type="GO" id="GO:0005634">
    <property type="term" value="C:nucleus"/>
    <property type="evidence" value="ECO:0000266"/>
    <property type="project" value="RGD"/>
</dbReference>
<dbReference type="GO" id="GO:0098794">
    <property type="term" value="C:postsynapse"/>
    <property type="evidence" value="ECO:0000314"/>
    <property type="project" value="SynGO"/>
</dbReference>
<dbReference type="GO" id="GO:0098793">
    <property type="term" value="C:presynapse"/>
    <property type="evidence" value="ECO:0000314"/>
    <property type="project" value="SynGO"/>
</dbReference>
<dbReference type="GO" id="GO:0032991">
    <property type="term" value="C:protein-containing complex"/>
    <property type="evidence" value="ECO:0000266"/>
    <property type="project" value="RGD"/>
</dbReference>
<dbReference type="GO" id="GO:0072357">
    <property type="term" value="C:PTW/PP1 phosphatase complex"/>
    <property type="evidence" value="ECO:0000250"/>
    <property type="project" value="UniProtKB"/>
</dbReference>
<dbReference type="GO" id="GO:0005521">
    <property type="term" value="F:lamin binding"/>
    <property type="evidence" value="ECO:0000353"/>
    <property type="project" value="RGD"/>
</dbReference>
<dbReference type="GO" id="GO:0046872">
    <property type="term" value="F:metal ion binding"/>
    <property type="evidence" value="ECO:0007669"/>
    <property type="project" value="UniProtKB-KW"/>
</dbReference>
<dbReference type="GO" id="GO:0016791">
    <property type="term" value="F:phosphatase activity"/>
    <property type="evidence" value="ECO:0000250"/>
    <property type="project" value="UniProtKB"/>
</dbReference>
<dbReference type="GO" id="GO:0019904">
    <property type="term" value="F:protein domain specific binding"/>
    <property type="evidence" value="ECO:0000315"/>
    <property type="project" value="RGD"/>
</dbReference>
<dbReference type="GO" id="GO:0019901">
    <property type="term" value="F:protein kinase binding"/>
    <property type="evidence" value="ECO:0000266"/>
    <property type="project" value="RGD"/>
</dbReference>
<dbReference type="GO" id="GO:0008157">
    <property type="term" value="F:protein phosphatase 1 binding"/>
    <property type="evidence" value="ECO:0000353"/>
    <property type="project" value="RGD"/>
</dbReference>
<dbReference type="GO" id="GO:0019903">
    <property type="term" value="F:protein phosphatase binding"/>
    <property type="evidence" value="ECO:0000314"/>
    <property type="project" value="RGD"/>
</dbReference>
<dbReference type="GO" id="GO:0004722">
    <property type="term" value="F:protein serine/threonine phosphatase activity"/>
    <property type="evidence" value="ECO:0000250"/>
    <property type="project" value="UniProtKB"/>
</dbReference>
<dbReference type="GO" id="GO:0044877">
    <property type="term" value="F:protein-containing complex binding"/>
    <property type="evidence" value="ECO:0000353"/>
    <property type="project" value="RGD"/>
</dbReference>
<dbReference type="GO" id="GO:0001824">
    <property type="term" value="P:blastocyst development"/>
    <property type="evidence" value="ECO:0000266"/>
    <property type="project" value="RGD"/>
</dbReference>
<dbReference type="GO" id="GO:0051301">
    <property type="term" value="P:cell division"/>
    <property type="evidence" value="ECO:0007669"/>
    <property type="project" value="UniProtKB-KW"/>
</dbReference>
<dbReference type="GO" id="GO:0032922">
    <property type="term" value="P:circadian regulation of gene expression"/>
    <property type="evidence" value="ECO:0000250"/>
    <property type="project" value="UniProtKB"/>
</dbReference>
<dbReference type="GO" id="GO:0043153">
    <property type="term" value="P:entrainment of circadian clock by photoperiod"/>
    <property type="evidence" value="ECO:0000250"/>
    <property type="project" value="UniProtKB"/>
</dbReference>
<dbReference type="GO" id="GO:0005977">
    <property type="term" value="P:glycogen metabolic process"/>
    <property type="evidence" value="ECO:0007669"/>
    <property type="project" value="UniProtKB-KW"/>
</dbReference>
<dbReference type="GO" id="GO:0030182">
    <property type="term" value="P:neuron differentiation"/>
    <property type="evidence" value="ECO:0000314"/>
    <property type="project" value="MGI"/>
</dbReference>
<dbReference type="GO" id="GO:0060252">
    <property type="term" value="P:positive regulation of glial cell proliferation"/>
    <property type="evidence" value="ECO:0000315"/>
    <property type="project" value="RGD"/>
</dbReference>
<dbReference type="GO" id="GO:0006470">
    <property type="term" value="P:protein dephosphorylation"/>
    <property type="evidence" value="ECO:0000250"/>
    <property type="project" value="UniProtKB"/>
</dbReference>
<dbReference type="GO" id="GO:0042752">
    <property type="term" value="P:regulation of circadian rhythm"/>
    <property type="evidence" value="ECO:0000250"/>
    <property type="project" value="UniProtKB"/>
</dbReference>
<dbReference type="GO" id="GO:0046822">
    <property type="term" value="P:regulation of nucleocytoplasmic transport"/>
    <property type="evidence" value="ECO:0000266"/>
    <property type="project" value="RGD"/>
</dbReference>
<dbReference type="GO" id="GO:0007283">
    <property type="term" value="P:spermatogenesis"/>
    <property type="evidence" value="ECO:0000266"/>
    <property type="project" value="RGD"/>
</dbReference>
<dbReference type="CDD" id="cd07414">
    <property type="entry name" value="MPP_PP1_PPKL"/>
    <property type="match status" value="1"/>
</dbReference>
<dbReference type="FunFam" id="3.60.21.10:FF:000004">
    <property type="entry name" value="Serine/threonine-protein phosphatase"/>
    <property type="match status" value="1"/>
</dbReference>
<dbReference type="Gene3D" id="3.60.21.10">
    <property type="match status" value="1"/>
</dbReference>
<dbReference type="InterPro" id="IPR004843">
    <property type="entry name" value="Calcineurin-like_PHP_ApaH"/>
</dbReference>
<dbReference type="InterPro" id="IPR029052">
    <property type="entry name" value="Metallo-depent_PP-like"/>
</dbReference>
<dbReference type="InterPro" id="IPR050341">
    <property type="entry name" value="PP1_catalytic_subunit"/>
</dbReference>
<dbReference type="InterPro" id="IPR006186">
    <property type="entry name" value="Ser/Thr-sp_prot-phosphatase"/>
</dbReference>
<dbReference type="InterPro" id="IPR031675">
    <property type="entry name" value="STPPase_N"/>
</dbReference>
<dbReference type="PANTHER" id="PTHR11668">
    <property type="entry name" value="SERINE/THREONINE PROTEIN PHOSPHATASE"/>
    <property type="match status" value="1"/>
</dbReference>
<dbReference type="PANTHER" id="PTHR11668:SF300">
    <property type="entry name" value="SERINE_THREONINE-PROTEIN PHOSPHATASE"/>
    <property type="match status" value="1"/>
</dbReference>
<dbReference type="Pfam" id="PF00149">
    <property type="entry name" value="Metallophos"/>
    <property type="match status" value="1"/>
</dbReference>
<dbReference type="Pfam" id="PF16891">
    <property type="entry name" value="STPPase_N"/>
    <property type="match status" value="1"/>
</dbReference>
<dbReference type="PRINTS" id="PR00114">
    <property type="entry name" value="STPHPHTASE"/>
</dbReference>
<dbReference type="SMART" id="SM00156">
    <property type="entry name" value="PP2Ac"/>
    <property type="match status" value="1"/>
</dbReference>
<dbReference type="SUPFAM" id="SSF56300">
    <property type="entry name" value="Metallo-dependent phosphatases"/>
    <property type="match status" value="1"/>
</dbReference>
<dbReference type="PROSITE" id="PS00125">
    <property type="entry name" value="SER_THR_PHOSPHATASE"/>
    <property type="match status" value="1"/>
</dbReference>
<protein>
    <recommendedName>
        <fullName>Serine/threonine-protein phosphatase PP1-gamma catalytic subunit</fullName>
        <shortName>PP-1G</shortName>
        <ecNumber evidence="2">3.1.3.16</ecNumber>
    </recommendedName>
    <alternativeName>
        <fullName>Protein phosphatase 1C catalytic subunit</fullName>
    </alternativeName>
</protein>
<organism>
    <name type="scientific">Rattus norvegicus</name>
    <name type="common">Rat</name>
    <dbReference type="NCBI Taxonomy" id="10116"/>
    <lineage>
        <taxon>Eukaryota</taxon>
        <taxon>Metazoa</taxon>
        <taxon>Chordata</taxon>
        <taxon>Craniata</taxon>
        <taxon>Vertebrata</taxon>
        <taxon>Euteleostomi</taxon>
        <taxon>Mammalia</taxon>
        <taxon>Eutheria</taxon>
        <taxon>Euarchontoglires</taxon>
        <taxon>Glires</taxon>
        <taxon>Rodentia</taxon>
        <taxon>Myomorpha</taxon>
        <taxon>Muroidea</taxon>
        <taxon>Muridae</taxon>
        <taxon>Murinae</taxon>
        <taxon>Rattus</taxon>
    </lineage>
</organism>
<feature type="initiator methionine" description="Removed" evidence="2">
    <location>
        <position position="1"/>
    </location>
</feature>
<feature type="chain" id="PRO_0000058789" description="Serine/threonine-protein phosphatase PP1-gamma catalytic subunit">
    <location>
        <begin position="2"/>
        <end position="323"/>
    </location>
</feature>
<feature type="region of interest" description="Disordered" evidence="4">
    <location>
        <begin position="302"/>
        <end position="323"/>
    </location>
</feature>
<feature type="active site" description="Proton donor" evidence="2">
    <location>
        <position position="125"/>
    </location>
</feature>
<feature type="binding site" evidence="2">
    <location>
        <position position="64"/>
    </location>
    <ligand>
        <name>Mn(2+)</name>
        <dbReference type="ChEBI" id="CHEBI:29035"/>
        <label>1</label>
    </ligand>
</feature>
<feature type="binding site" evidence="2">
    <location>
        <position position="64"/>
    </location>
    <ligand>
        <name>Mn(2+)</name>
        <dbReference type="ChEBI" id="CHEBI:29035"/>
        <label>2</label>
    </ligand>
</feature>
<feature type="binding site" evidence="2">
    <location>
        <position position="66"/>
    </location>
    <ligand>
        <name>Mn(2+)</name>
        <dbReference type="ChEBI" id="CHEBI:29035"/>
        <label>1</label>
    </ligand>
</feature>
<feature type="binding site" evidence="2">
    <location>
        <position position="92"/>
    </location>
    <ligand>
        <name>Mn(2+)</name>
        <dbReference type="ChEBI" id="CHEBI:29035"/>
        <label>1</label>
    </ligand>
</feature>
<feature type="binding site" evidence="7">
    <location>
        <position position="92"/>
    </location>
    <ligand>
        <name>Mn(2+)</name>
        <dbReference type="ChEBI" id="CHEBI:29035"/>
        <label>2</label>
    </ligand>
</feature>
<feature type="binding site" evidence="7">
    <location>
        <position position="124"/>
    </location>
    <ligand>
        <name>Mn(2+)</name>
        <dbReference type="ChEBI" id="CHEBI:29035"/>
        <label>2</label>
    </ligand>
</feature>
<feature type="binding site" evidence="7">
    <location>
        <position position="173"/>
    </location>
    <ligand>
        <name>Mn(2+)</name>
        <dbReference type="ChEBI" id="CHEBI:29035"/>
        <label>2</label>
    </ligand>
</feature>
<feature type="binding site" evidence="7">
    <location>
        <position position="248"/>
    </location>
    <ligand>
        <name>Mn(2+)</name>
        <dbReference type="ChEBI" id="CHEBI:29035"/>
        <label>2</label>
    </ligand>
</feature>
<feature type="modified residue" description="N-acetylalanine" evidence="2">
    <location>
        <position position="2"/>
    </location>
</feature>
<feature type="modified residue" description="Phosphothreonine" evidence="2">
    <location>
        <position position="307"/>
    </location>
</feature>
<feature type="modified residue" description="Phosphothreonine" evidence="2">
    <location>
        <position position="311"/>
    </location>
</feature>
<feature type="splice variant" id="VSP_011566" description="In isoform 2." evidence="11">
    <original>GMITKQAKK</original>
    <variation>VGSGLNPSIQKASNYRNNTVLYE</variation>
    <location>
        <begin position="315"/>
        <end position="323"/>
    </location>
</feature>
<feature type="helix" evidence="13">
    <location>
        <begin position="9"/>
        <end position="17"/>
    </location>
</feature>
<feature type="turn" evidence="13">
    <location>
        <begin position="18"/>
        <end position="21"/>
    </location>
</feature>
<feature type="helix" evidence="13">
    <location>
        <begin position="32"/>
        <end position="48"/>
    </location>
</feature>
<feature type="strand" evidence="13">
    <location>
        <begin position="51"/>
        <end position="55"/>
    </location>
</feature>
<feature type="strand" evidence="13">
    <location>
        <begin position="57"/>
        <end position="62"/>
    </location>
</feature>
<feature type="helix" evidence="13">
    <location>
        <begin position="69"/>
        <end position="79"/>
    </location>
</feature>
<feature type="strand" evidence="13">
    <location>
        <begin position="87"/>
        <end position="89"/>
    </location>
</feature>
<feature type="strand" evidence="13">
    <location>
        <begin position="94"/>
        <end position="98"/>
    </location>
</feature>
<feature type="helix" evidence="13">
    <location>
        <begin position="100"/>
        <end position="113"/>
    </location>
</feature>
<feature type="turn" evidence="13">
    <location>
        <begin position="115"/>
        <end position="117"/>
    </location>
</feature>
<feature type="strand" evidence="13">
    <location>
        <begin position="118"/>
        <end position="120"/>
    </location>
</feature>
<feature type="helix" evidence="13">
    <location>
        <begin position="128"/>
        <end position="131"/>
    </location>
</feature>
<feature type="helix" evidence="13">
    <location>
        <begin position="136"/>
        <end position="143"/>
    </location>
</feature>
<feature type="helix" evidence="13">
    <location>
        <begin position="146"/>
        <end position="156"/>
    </location>
</feature>
<feature type="strand" evidence="13">
    <location>
        <begin position="162"/>
        <end position="165"/>
    </location>
</feature>
<feature type="turn" evidence="13">
    <location>
        <begin position="166"/>
        <end position="168"/>
    </location>
</feature>
<feature type="strand" evidence="13">
    <location>
        <begin position="169"/>
        <end position="174"/>
    </location>
</feature>
<feature type="helix" evidence="13">
    <location>
        <begin position="183"/>
        <end position="187"/>
    </location>
</feature>
<feature type="strand" evidence="13">
    <location>
        <begin position="197"/>
        <end position="199"/>
    </location>
</feature>
<feature type="helix" evidence="13">
    <location>
        <begin position="200"/>
        <end position="206"/>
    </location>
</feature>
<feature type="strand" evidence="13">
    <location>
        <begin position="214"/>
        <end position="218"/>
    </location>
</feature>
<feature type="strand" evidence="13">
    <location>
        <begin position="222"/>
        <end position="227"/>
    </location>
</feature>
<feature type="helix" evidence="13">
    <location>
        <begin position="229"/>
        <end position="239"/>
    </location>
</feature>
<feature type="strand" evidence="13">
    <location>
        <begin position="242"/>
        <end position="246"/>
    </location>
</feature>
<feature type="strand" evidence="13">
    <location>
        <begin position="253"/>
        <end position="258"/>
    </location>
</feature>
<feature type="turn" evidence="13">
    <location>
        <begin position="259"/>
        <end position="262"/>
    </location>
</feature>
<feature type="strand" evidence="13">
    <location>
        <begin position="263"/>
        <end position="267"/>
    </location>
</feature>
<feature type="helix" evidence="13">
    <location>
        <begin position="272"/>
        <end position="274"/>
    </location>
</feature>
<feature type="strand" evidence="13">
    <location>
        <begin position="279"/>
        <end position="285"/>
    </location>
</feature>
<feature type="strand" evidence="13">
    <location>
        <begin position="290"/>
        <end position="296"/>
    </location>
</feature>
<feature type="sequence conflict" description="In Ref. 1; BAA14197." evidence="12" ref="1">
    <original>L</original>
    <variation>F</variation>
    <location sequence="P63088-2">
        <position position="214"/>
    </location>
</feature>
<comment type="function">
    <text evidence="2 3">Protein phosphatase that associates with over 200 regulatory proteins to form highly specific holoenzymes which dephosphorylate hundreds of biological targets. Protein phosphatase 1 (PP1) is essential for cell division, and participates in the regulation of glycogen metabolism, muscle contractility and protein synthesis. Dephosphorylates RPS6KB1. Involved in regulation of ionic conductances and long-term synaptic plasticity. May play an important role in dephosphorylating substrates such as the postsynaptic density-associated Ca(2+)/calmodulin dependent protein kinase II. Component of the PTW/PP1 phosphatase complex, which plays a role in the control of chromatin structure and cell cycle progression during the transition from mitosis into interphase. In balance with CSNK1D and CSNK1E, determines the circadian period length, through the regulation of the speed and rhythmicity of PER1 and PER2 phosphorylation. May dephosphorylate CSNK1D and CSNK1E. Regulates the recruitment of the SKA complex to kinetochores (By similarity). Core component of the SHOC2-MRAS-PP1c (SMP) holophosphatase complex that regulates the MAPK pathway activation (By similarity). Dephosphorylates MKI67 at the onset of anaphase (By similarity). The SMP complex specifically dephosphorylates the inhibitory phosphorylation at 'Ser-259' of RAF1 kinase, 'Ser-365' of BRAF kinase and 'Ser-214' of ARAF kinase, stimulating their kinase activities (By similarity). The SMP complex enhances the dephosphorylation activity and substrate specificity of PP1c (By similarity).</text>
</comment>
<comment type="function">
    <molecule>Isoform 2</molecule>
    <text evidence="2">Required for normal male fertility.</text>
</comment>
<comment type="catalytic activity">
    <reaction evidence="2">
        <text>O-phospho-L-seryl-[protein] + H2O = L-seryl-[protein] + phosphate</text>
        <dbReference type="Rhea" id="RHEA:20629"/>
        <dbReference type="Rhea" id="RHEA-COMP:9863"/>
        <dbReference type="Rhea" id="RHEA-COMP:11604"/>
        <dbReference type="ChEBI" id="CHEBI:15377"/>
        <dbReference type="ChEBI" id="CHEBI:29999"/>
        <dbReference type="ChEBI" id="CHEBI:43474"/>
        <dbReference type="ChEBI" id="CHEBI:83421"/>
        <dbReference type="EC" id="3.1.3.16"/>
    </reaction>
</comment>
<comment type="catalytic activity">
    <reaction evidence="2">
        <text>O-phospho-L-threonyl-[protein] + H2O = L-threonyl-[protein] + phosphate</text>
        <dbReference type="Rhea" id="RHEA:47004"/>
        <dbReference type="Rhea" id="RHEA-COMP:11060"/>
        <dbReference type="Rhea" id="RHEA-COMP:11605"/>
        <dbReference type="ChEBI" id="CHEBI:15377"/>
        <dbReference type="ChEBI" id="CHEBI:30013"/>
        <dbReference type="ChEBI" id="CHEBI:43474"/>
        <dbReference type="ChEBI" id="CHEBI:61977"/>
        <dbReference type="EC" id="3.1.3.16"/>
    </reaction>
</comment>
<comment type="cofactor">
    <cofactor evidence="2">
        <name>Mn(2+)</name>
        <dbReference type="ChEBI" id="CHEBI:29035"/>
    </cofactor>
    <text evidence="2">Binds 2 manganese ions per subunit.</text>
</comment>
<comment type="activity regulation">
    <text evidence="1">Inactivated by binding to URI1.</text>
</comment>
<comment type="subunit">
    <text evidence="2 3 5 6 8 10">PP1 comprises a catalytic subunit, PPP1CA, PPP1CB or PPP1CC, which is folded into its native form by inhibitor 2 and glycogen synthetase kinase 3, and then complexed to one or several targeting or regulatory subunits. PPP1R12A, PPP1R12B and PPP1R12C mediate binding to myosin. PPP1R3A (in skeletal muscle), PPP1R3B (in sliver), PPP1R3C, PPP1R3D and PPP1R3F (in brain) mediate binding to glycogen. PPP1R15A and PPP1R15B mediate binding to EIF2S1. Part of a complex containing PPP1R15B, PP1 and NCK1/2. Interacts with PPP1R3B, PPP1R7 and CDCA2. Isoform 2 interacts with SPZ1. Interacts with IKFZ1; the interaction targets PPP1CC to pericentromeric heterochromatin, dephosphorylates IKAROS, stabilizes it and prevents it from degradation. Interacts with NOM1 and PPP1R8. Component of the PTW/PP1 phosphatase complex, composed of PPP1R10/PNUTS, TOX4, WDR82, and PPP1CA or PPP1CB or PPP1CC. Interacts with PPP1R8 (By similarity). Interacts with NEK2. Interacts with URI1; the interaction is phosphorylation-dependent and occurs in a growth factor-dependent manner (By similarity). Interacts with FOXP3 (By similarity). Interacts with TMEM225 (via RVxF motif) (By similarity). Interacts with MKI67 (By similarity). Interacts with RRP1B; this targets PPP1CC to the nucleolus (By similarity). Found in a complex with PPP1CA, PPP1CC, SHC1 and PEAK1 (By similarity) (PubMed:10504266, PubMed:10585469, PubMed:7720853, PubMed:9841883). Interacts with DYNLT4 (By similarity). Interacts (via RVxF motif) with FIRRM; regulates PLK1 kinase activity (By similarity). Interacts with the KNL1 complex subunit KNL1; the interaction is direct and mutually exclusive with KNL1 binding to microtubules (By similarity). Component of the SHOC2-MRAS-PP1c (SMP) complex consisting of SHOC2, GTP-bound M-Ras/MRAS and the catalytic subunit of protein phosphatase 1 (either PPP1CA, PPP1CB or PPP1CC) (By similarity). SHOC2 and PP1c preferably bind M-Ras/MRAS, but they also bind K-Ras/KRAS, N-Ras/NRAS and H-Ras/HRAS; these interactions are GTP-dependent and both SHOC2 and PP1c are required to form a stable complex (By similarity). Interacts with SHOC2 in the absence of Ras GTPases (By similarity).</text>
</comment>
<comment type="interaction">
    <interactant intactId="EBI-80049">
        <id>P63088</id>
    </interactant>
    <interactant intactId="EBI-4410410">
        <id>P23385</id>
        <label>Grm1</label>
    </interactant>
    <organismsDiffer>false</organismsDiffer>
    <experiments>15</experiments>
</comment>
<comment type="interaction">
    <interactant intactId="EBI-80049">
        <id>P63088</id>
    </interactant>
    <interactant intactId="EBI-2902734">
        <id>P31424</id>
        <label>Grm5</label>
    </interactant>
    <organismsDiffer>false</organismsDiffer>
    <experiments>19</experiments>
</comment>
<comment type="interaction">
    <interactant intactId="EBI-80049">
        <id>P63088</id>
    </interactant>
    <interactant intactId="EBI-6936416">
        <id>P35400</id>
        <label>Grm7</label>
    </interactant>
    <organismsDiffer>false</organismsDiffer>
    <experiments>4</experiments>
</comment>
<comment type="interaction">
    <interactant intactId="EBI-80049">
        <id>P63088</id>
    </interactant>
    <interactant intactId="EBI-6935714">
        <id>Q63337</id>
        <label>mGluR7</label>
    </interactant>
    <organismsDiffer>false</organismsDiffer>
    <experiments>11</experiments>
</comment>
<comment type="interaction">
    <interactant intactId="EBI-80049">
        <id>P63088</id>
    </interactant>
    <interactant intactId="EBI-7092421">
        <id>O35867</id>
        <label>Ppp1r9a</label>
    </interactant>
    <organismsDiffer>false</organismsDiffer>
    <experiments>2</experiments>
</comment>
<comment type="interaction">
    <interactant intactId="EBI-80049">
        <id>P63088</id>
    </interactant>
    <interactant intactId="EBI-80022">
        <id>O35274</id>
        <label>Ppp1r9b</label>
    </interactant>
    <organismsDiffer>false</organismsDiffer>
    <experiments>3</experiments>
</comment>
<comment type="interaction">
    <interactant intactId="EBI-80049">
        <id>P63088</id>
    </interactant>
    <interactant intactId="EBI-15644430">
        <id>Q5PQX1</id>
        <label>Tor1aip1</label>
    </interactant>
    <organismsDiffer>false</organismsDiffer>
    <experiments>2</experiments>
</comment>
<comment type="interaction">
    <interactant intactId="EBI-80049">
        <id>P63088</id>
    </interactant>
    <interactant intactId="EBI-539828">
        <id>O15294</id>
        <label>OGT</label>
    </interactant>
    <organismsDiffer>true</organismsDiffer>
    <experiments>3</experiments>
</comment>
<comment type="subcellular location">
    <subcellularLocation>
        <location evidence="2">Cytoplasm</location>
    </subcellularLocation>
    <subcellularLocation>
        <location evidence="2">Nucleus</location>
    </subcellularLocation>
    <subcellularLocation>
        <location evidence="2">Cleavage furrow</location>
    </subcellularLocation>
    <subcellularLocation>
        <location evidence="2">Nucleus</location>
        <location evidence="2">Nucleolus</location>
    </subcellularLocation>
    <subcellularLocation>
        <location evidence="2">Nucleus</location>
        <location evidence="2">Nucleoplasm</location>
    </subcellularLocation>
    <subcellularLocation>
        <location evidence="2">Chromosome</location>
        <location evidence="2">Centromere</location>
        <location evidence="2">Kinetochore</location>
    </subcellularLocation>
    <subcellularLocation>
        <location evidence="2">Nucleus speckle</location>
    </subcellularLocation>
    <subcellularLocation>
        <location evidence="2">Midbody</location>
    </subcellularLocation>
    <subcellularLocation>
        <location evidence="2">Mitochondrion</location>
    </subcellularLocation>
    <subcellularLocation>
        <location evidence="2">Cytoplasm</location>
        <location evidence="2">Cytoskeleton</location>
        <location evidence="2">Microtubule organizing center</location>
    </subcellularLocation>
    <text evidence="2 3">Colocalizes with SPZ1 in the nucleus. Colocalizes with URI1 at mitochondrion. Rapidly exchanges between the nucleolar, nucleoplasmic and cytoplasmic compartments. Highly mobile in cells and can be relocalized through interaction with targeting subunits. In the presence of PPP1R8 relocalizes from the nucleolus to nuclear speckles. Shows a dynamic targeting to specific sites throughout the cell cycle. Highly concentrated in nucleoli of interphase cells and localizes at kinetochores early in mitosis. Relocalization to chromosome-containing regions occurs at the transition from early to late anaphase. Also accumulates at the cleavage furrow and midbody by telophase.</text>
</comment>
<comment type="alternative products">
    <event type="alternative splicing"/>
    <isoform>
        <id>P63088-1</id>
        <name>1</name>
        <name>Gamma-1</name>
        <sequence type="displayed"/>
    </isoform>
    <isoform>
        <id>P63088-2</id>
        <name>2</name>
        <name>Gamma-2</name>
        <sequence type="described" ref="VSP_011566"/>
    </isoform>
</comment>
<comment type="tissue specificity">
    <text evidence="9">Isoform 2 is expressed only in testis, in the late spermatocytes and early spematids (at protein level).</text>
</comment>
<comment type="PTM">
    <text evidence="1">Phosphorylated by NEK2.</text>
</comment>
<comment type="similarity">
    <text evidence="12">Belongs to the PPP phosphatase family. PP-1 subfamily.</text>
</comment>
<comment type="online information" name="Protein Spotlight">
    <link uri="https://www.proteinspotlight.org/back_issues/032"/>
    <text>The things we forget - Issue 32 of March 2003</text>
</comment>
<proteinExistence type="evidence at protein level"/>
<reference key="1">
    <citation type="journal article" date="1990" name="Jpn. J. Cancer Res.">
        <title>Identification of members of the protein phosphatase 1 gene family in the rat and enhanced expression of protein phosphatase 1 alpha gene in rat hepatocellular carcinomas.</title>
        <authorList>
            <person name="Sasaki K."/>
            <person name="Shima H."/>
            <person name="Kitagawa Y."/>
            <person name="Irino S."/>
            <person name="Sugimura T."/>
            <person name="Nagao M."/>
        </authorList>
    </citation>
    <scope>NUCLEOTIDE SEQUENCE [MRNA] (ISOFORMS 1 AND 2)</scope>
    <scope>ALTERNATIVE SPLICING</scope>
</reference>
<reference key="2">
    <citation type="journal article" date="1991" name="Jpn. J. Cancer Res.">
        <authorList>
            <person name="Sasaki K."/>
            <person name="Shima H."/>
            <person name="Kitagawa Y."/>
            <person name="Irino S."/>
            <person name="Sugimura T."/>
            <person name="Nagao M."/>
        </authorList>
    </citation>
    <scope>ERRATUM OF PUBMED:2177460</scope>
</reference>
<reference key="3">
    <citation type="journal article" date="1999" name="Biochemistry">
        <title>Regulation of neurabin I interaction with protein phosphatase 1 by phosphorylation.</title>
        <authorList>
            <person name="McAvoy T."/>
            <person name="Allen P.B."/>
            <person name="Obaishi H."/>
            <person name="Nakanishi H."/>
            <person name="Takai Y."/>
            <person name="Greengard P."/>
            <person name="Nairn A.C."/>
            <person name="Hemmings H.C. Jr."/>
        </authorList>
    </citation>
    <scope>PROTEIN SEQUENCE OF 42-58 AND 212-234</scope>
    <scope>INTERACTION WITH PPP1R9A</scope>
    <source>
        <strain>Sprague-Dawley</strain>
    </source>
</reference>
<reference key="4">
    <citation type="journal article" date="1993" name="Biochem. Biophys. Res. Commun.">
        <title>Protein phosphatase 1 gamma 2 is associated with nuclei of meiotic cells in rat testis.</title>
        <authorList>
            <person name="Shima H."/>
            <person name="Haneji T."/>
            <person name="Hatano Y."/>
            <person name="Kasugai I."/>
            <person name="Sugimura T."/>
            <person name="Nagao M."/>
        </authorList>
    </citation>
    <scope>TISSUE SPECIFICITY (ISOFORM 2)</scope>
</reference>
<reference key="5">
    <citation type="journal article" date="1995" name="FEBS Lett.">
        <title>Purification of the hepatic glycogen-associated form of protein phosphatase-1 by microcystin-Sepharose affinity chromatography.</title>
        <authorList>
            <person name="Moorhead G."/>
            <person name="MacKintosh C."/>
            <person name="Morrice N."/>
            <person name="Cohen P."/>
        </authorList>
    </citation>
    <scope>INTERACTION WITH PPP1R3B</scope>
</reference>
<reference key="6">
    <citation type="journal article" date="1998" name="Biochem. J.">
        <title>Identification of the separate domains in the hepatic glycogen-targeting subunit of protein phosphatase 1 that interact with phosphorylase a, glycogen and protein phosphatase 1.</title>
        <authorList>
            <person name="Armstrong C.G."/>
            <person name="Doherty M.J."/>
            <person name="Cohen P.T.W."/>
        </authorList>
    </citation>
    <scope>INTERACTION WITH PPP1R3B</scope>
</reference>
<reference key="7">
    <citation type="journal article" date="1999" name="J. Biol. Chem.">
        <title>Brain actin-associated protein phosphatase 1 holoenzymes containing spinophilin, neurabin, and selected catalytic subunit isoforms.</title>
        <authorList>
            <person name="MacMillan L.B."/>
            <person name="Bass M.A."/>
            <person name="Cheng N."/>
            <person name="Howard E.F."/>
            <person name="Tamura M."/>
            <person name="Strack S."/>
            <person name="Wadzinski B.E."/>
            <person name="Colbran R.J."/>
        </authorList>
    </citation>
    <scope>SUBUNIT</scope>
</reference>
<reference key="8">
    <citation type="journal article" date="2007" name="J. Biol. Chem.">
        <title>Structural basis for regulation of protein phosphatase 1 by inhibitor-2.</title>
        <authorList>
            <person name="Hurley T.D."/>
            <person name="Yang J."/>
            <person name="Zhang L."/>
            <person name="Goodwin K.D."/>
            <person name="Zou Q."/>
            <person name="Cortese M."/>
            <person name="Dunker A.K."/>
            <person name="DePaoli-Roach A.A."/>
        </authorList>
    </citation>
    <scope>X-RAY CRYSTALLOGRAPHY (2.5 ANGSTROMS) OF 2-323 IN COMPLEX WITH MANGANESE AND M.MUSCULUS INHIBITOR PPP1R2</scope>
</reference>
<sequence length="323" mass="36984">MADIDKLNIDSIIQRLLEVRGSKPGKNVQLQENEIRGLCLKSREIFLSQPILLELEAPLKICGDIHGQYYDLLRLFEYGGFPPESNYLFLGDYVDRGKQSLETICLLLAYKIKYPENFFLLRGNHECASINRIYGFYDECKRRYNIKLWKTFTDCFNCLPIAAIVDEKIFCCHGGLSPDLQSMEQIRRIMRPTDVPDQGLLCDLLWSDPDKDVLGWGENDRGVSFTFGAEVVAKFLHKHDLDLICRAHQVVEDGYEFFAKRQLVTLFSAPNYCGEFDNAGAMMSVDETLMCSFQILKPAEKKKPNATRPVTPPRGMITKQAKK</sequence>
<evidence type="ECO:0000250" key="1"/>
<evidence type="ECO:0000250" key="2">
    <source>
        <dbReference type="UniProtKB" id="P36873"/>
    </source>
</evidence>
<evidence type="ECO:0000250" key="3">
    <source>
        <dbReference type="UniProtKB" id="P63087"/>
    </source>
</evidence>
<evidence type="ECO:0000256" key="4">
    <source>
        <dbReference type="SAM" id="MobiDB-lite"/>
    </source>
</evidence>
<evidence type="ECO:0000269" key="5">
    <source>
    </source>
</evidence>
<evidence type="ECO:0000269" key="6">
    <source>
    </source>
</evidence>
<evidence type="ECO:0000269" key="7">
    <source>
    </source>
</evidence>
<evidence type="ECO:0000269" key="8">
    <source>
    </source>
</evidence>
<evidence type="ECO:0000269" key="9">
    <source>
    </source>
</evidence>
<evidence type="ECO:0000269" key="10">
    <source>
    </source>
</evidence>
<evidence type="ECO:0000303" key="11">
    <source>
    </source>
</evidence>
<evidence type="ECO:0000305" key="12"/>
<evidence type="ECO:0007829" key="13">
    <source>
        <dbReference type="PDB" id="2O8G"/>
    </source>
</evidence>